<gene>
    <name type="ordered locus">BceJ2315_55590</name>
    <name type="ORF">BCAM2122</name>
</gene>
<feature type="chain" id="PRO_0000387631" description="Acetaldehyde dehydrogenase 2">
    <location>
        <begin position="1"/>
        <end position="320"/>
    </location>
</feature>
<feature type="active site" description="Acyl-thioester intermediate" evidence="1">
    <location>
        <position position="129"/>
    </location>
</feature>
<feature type="binding site" evidence="1">
    <location>
        <begin position="160"/>
        <end position="168"/>
    </location>
    <ligand>
        <name>NAD(+)</name>
        <dbReference type="ChEBI" id="CHEBI:57540"/>
    </ligand>
</feature>
<feature type="binding site" evidence="1">
    <location>
        <position position="287"/>
    </location>
    <ligand>
        <name>NAD(+)</name>
        <dbReference type="ChEBI" id="CHEBI:57540"/>
    </ligand>
</feature>
<organism>
    <name type="scientific">Burkholderia cenocepacia (strain ATCC BAA-245 / DSM 16553 / LMG 16656 / NCTC 13227 / J2315 / CF5610)</name>
    <name type="common">Burkholderia cepacia (strain J2315)</name>
    <dbReference type="NCBI Taxonomy" id="216591"/>
    <lineage>
        <taxon>Bacteria</taxon>
        <taxon>Pseudomonadati</taxon>
        <taxon>Pseudomonadota</taxon>
        <taxon>Betaproteobacteria</taxon>
        <taxon>Burkholderiales</taxon>
        <taxon>Burkholderiaceae</taxon>
        <taxon>Burkholderia</taxon>
        <taxon>Burkholderia cepacia complex</taxon>
    </lineage>
</organism>
<evidence type="ECO:0000255" key="1">
    <source>
        <dbReference type="HAMAP-Rule" id="MF_01657"/>
    </source>
</evidence>
<sequence>MNDRVKVAIIGPGNIGTDLMIKIMRNGRHLKMGAMVGVDPNSEGLARAARMDVATTAEGIDGLLRLDVFKEIDIVFDATSAGAHGRHNELLQAHGVQVIDLTPAAIGPYVIPSINLEEENATNMNMVTCGGQATIPIVAAVSRIAKVHYAEIVASISSRSAGPGTRANIDEFTETTRAAIEKLGGAERGKAIIVLNPAEPPLIMRDTVFVLSENAEPAAIEASIAEMVSSVQEYVPGYRLKQSVQFDAVPPDMPLNVPGIGPRHGLKTSVFLEVEGAAHYLPSYAGNLDIMTSAALACGDMMARRRMAAGIARGFKETAR</sequence>
<name>ACDH2_BURCJ</name>
<dbReference type="EC" id="1.2.1.10" evidence="1"/>
<dbReference type="EMBL" id="AM747721">
    <property type="protein sequence ID" value="CAR55980.1"/>
    <property type="molecule type" value="Genomic_DNA"/>
</dbReference>
<dbReference type="RefSeq" id="WP_006490293.1">
    <property type="nucleotide sequence ID" value="NC_011001.1"/>
</dbReference>
<dbReference type="SMR" id="B4EFI8"/>
<dbReference type="KEGG" id="bcj:BCAM2122"/>
<dbReference type="eggNOG" id="COG4569">
    <property type="taxonomic scope" value="Bacteria"/>
</dbReference>
<dbReference type="HOGENOM" id="CLU_062208_0_0_4"/>
<dbReference type="BioCyc" id="BCEN216591:G1G1V-6191-MONOMER"/>
<dbReference type="Proteomes" id="UP000001035">
    <property type="component" value="Chromosome 2"/>
</dbReference>
<dbReference type="GO" id="GO:0008774">
    <property type="term" value="F:acetaldehyde dehydrogenase (acetylating) activity"/>
    <property type="evidence" value="ECO:0007669"/>
    <property type="project" value="UniProtKB-UniRule"/>
</dbReference>
<dbReference type="GO" id="GO:0051287">
    <property type="term" value="F:NAD binding"/>
    <property type="evidence" value="ECO:0007669"/>
    <property type="project" value="UniProtKB-UniRule"/>
</dbReference>
<dbReference type="GO" id="GO:0009056">
    <property type="term" value="P:catabolic process"/>
    <property type="evidence" value="ECO:0007669"/>
    <property type="project" value="UniProtKB-KW"/>
</dbReference>
<dbReference type="CDD" id="cd23933">
    <property type="entry name" value="ALDH_C"/>
    <property type="match status" value="1"/>
</dbReference>
<dbReference type="Gene3D" id="3.30.360.10">
    <property type="entry name" value="Dihydrodipicolinate Reductase, domain 2"/>
    <property type="match status" value="1"/>
</dbReference>
<dbReference type="Gene3D" id="3.40.50.720">
    <property type="entry name" value="NAD(P)-binding Rossmann-like Domain"/>
    <property type="match status" value="1"/>
</dbReference>
<dbReference type="HAMAP" id="MF_01657">
    <property type="entry name" value="Ac_ald_DH_ac"/>
    <property type="match status" value="1"/>
</dbReference>
<dbReference type="InterPro" id="IPR003361">
    <property type="entry name" value="Acetaldehyde_dehydrogenase"/>
</dbReference>
<dbReference type="InterPro" id="IPR015426">
    <property type="entry name" value="Acetylaldehyde_DH_C"/>
</dbReference>
<dbReference type="InterPro" id="IPR036291">
    <property type="entry name" value="NAD(P)-bd_dom_sf"/>
</dbReference>
<dbReference type="InterPro" id="IPR000534">
    <property type="entry name" value="Semialdehyde_DH_NAD-bd"/>
</dbReference>
<dbReference type="NCBIfam" id="TIGR03215">
    <property type="entry name" value="ac_ald_DH_ac"/>
    <property type="match status" value="1"/>
</dbReference>
<dbReference type="NCBIfam" id="NF006157">
    <property type="entry name" value="PRK08300.1"/>
    <property type="match status" value="1"/>
</dbReference>
<dbReference type="Pfam" id="PF09290">
    <property type="entry name" value="AcetDehyd-dimer"/>
    <property type="match status" value="1"/>
</dbReference>
<dbReference type="Pfam" id="PF01118">
    <property type="entry name" value="Semialdhyde_dh"/>
    <property type="match status" value="1"/>
</dbReference>
<dbReference type="PIRSF" id="PIRSF015689">
    <property type="entry name" value="Actaldh_dh_actl"/>
    <property type="match status" value="1"/>
</dbReference>
<dbReference type="SMART" id="SM00859">
    <property type="entry name" value="Semialdhyde_dh"/>
    <property type="match status" value="1"/>
</dbReference>
<dbReference type="SUPFAM" id="SSF55347">
    <property type="entry name" value="Glyceraldehyde-3-phosphate dehydrogenase-like, C-terminal domain"/>
    <property type="match status" value="1"/>
</dbReference>
<dbReference type="SUPFAM" id="SSF51735">
    <property type="entry name" value="NAD(P)-binding Rossmann-fold domains"/>
    <property type="match status" value="1"/>
</dbReference>
<protein>
    <recommendedName>
        <fullName evidence="1">Acetaldehyde dehydrogenase 2</fullName>
        <ecNumber evidence="1">1.2.1.10</ecNumber>
    </recommendedName>
    <alternativeName>
        <fullName evidence="1">Acetaldehyde dehydrogenase [acetylating] 2</fullName>
    </alternativeName>
</protein>
<reference key="1">
    <citation type="journal article" date="2009" name="J. Bacteriol.">
        <title>The genome of Burkholderia cenocepacia J2315, an epidemic pathogen of cystic fibrosis patients.</title>
        <authorList>
            <person name="Holden M.T."/>
            <person name="Seth-Smith H.M."/>
            <person name="Crossman L.C."/>
            <person name="Sebaihia M."/>
            <person name="Bentley S.D."/>
            <person name="Cerdeno-Tarraga A.M."/>
            <person name="Thomson N.R."/>
            <person name="Bason N."/>
            <person name="Quail M.A."/>
            <person name="Sharp S."/>
            <person name="Cherevach I."/>
            <person name="Churcher C."/>
            <person name="Goodhead I."/>
            <person name="Hauser H."/>
            <person name="Holroyd N."/>
            <person name="Mungall K."/>
            <person name="Scott P."/>
            <person name="Walker D."/>
            <person name="White B."/>
            <person name="Rose H."/>
            <person name="Iversen P."/>
            <person name="Mil-Homens D."/>
            <person name="Rocha E.P."/>
            <person name="Fialho A.M."/>
            <person name="Baldwin A."/>
            <person name="Dowson C."/>
            <person name="Barrell B.G."/>
            <person name="Govan J.R."/>
            <person name="Vandamme P."/>
            <person name="Hart C.A."/>
            <person name="Mahenthiralingam E."/>
            <person name="Parkhill J."/>
        </authorList>
    </citation>
    <scope>NUCLEOTIDE SEQUENCE [LARGE SCALE GENOMIC DNA]</scope>
    <source>
        <strain>ATCC BAA-245 / DSM 16553 / LMG 16656 / NCTC 13227 / J2315 / CF5610</strain>
    </source>
</reference>
<comment type="catalytic activity">
    <reaction evidence="1">
        <text>acetaldehyde + NAD(+) + CoA = acetyl-CoA + NADH + H(+)</text>
        <dbReference type="Rhea" id="RHEA:23288"/>
        <dbReference type="ChEBI" id="CHEBI:15343"/>
        <dbReference type="ChEBI" id="CHEBI:15378"/>
        <dbReference type="ChEBI" id="CHEBI:57287"/>
        <dbReference type="ChEBI" id="CHEBI:57288"/>
        <dbReference type="ChEBI" id="CHEBI:57540"/>
        <dbReference type="ChEBI" id="CHEBI:57945"/>
        <dbReference type="EC" id="1.2.1.10"/>
    </reaction>
</comment>
<comment type="similarity">
    <text evidence="1">Belongs to the acetaldehyde dehydrogenase family.</text>
</comment>
<accession>B4EFI8</accession>
<proteinExistence type="inferred from homology"/>
<keyword id="KW-0058">Aromatic hydrocarbons catabolism</keyword>
<keyword id="KW-0520">NAD</keyword>
<keyword id="KW-0560">Oxidoreductase</keyword>